<feature type="chain" id="PRO_1000166412" description="Small ribosomal subunit protein uS15">
    <location>
        <begin position="1"/>
        <end position="87"/>
    </location>
</feature>
<dbReference type="EMBL" id="CP001348">
    <property type="protein sequence ID" value="ACL76059.1"/>
    <property type="molecule type" value="Genomic_DNA"/>
</dbReference>
<dbReference type="RefSeq" id="WP_015925174.1">
    <property type="nucleotide sequence ID" value="NC_011898.1"/>
</dbReference>
<dbReference type="SMR" id="B8I2R6"/>
<dbReference type="STRING" id="394503.Ccel_1708"/>
<dbReference type="KEGG" id="cce:Ccel_1708"/>
<dbReference type="eggNOG" id="COG0184">
    <property type="taxonomic scope" value="Bacteria"/>
</dbReference>
<dbReference type="HOGENOM" id="CLU_148518_0_0_9"/>
<dbReference type="OrthoDB" id="9799262at2"/>
<dbReference type="Proteomes" id="UP000001349">
    <property type="component" value="Chromosome"/>
</dbReference>
<dbReference type="GO" id="GO:0022627">
    <property type="term" value="C:cytosolic small ribosomal subunit"/>
    <property type="evidence" value="ECO:0007669"/>
    <property type="project" value="TreeGrafter"/>
</dbReference>
<dbReference type="GO" id="GO:0019843">
    <property type="term" value="F:rRNA binding"/>
    <property type="evidence" value="ECO:0007669"/>
    <property type="project" value="UniProtKB-UniRule"/>
</dbReference>
<dbReference type="GO" id="GO:0003735">
    <property type="term" value="F:structural constituent of ribosome"/>
    <property type="evidence" value="ECO:0007669"/>
    <property type="project" value="InterPro"/>
</dbReference>
<dbReference type="GO" id="GO:0006412">
    <property type="term" value="P:translation"/>
    <property type="evidence" value="ECO:0007669"/>
    <property type="project" value="UniProtKB-UniRule"/>
</dbReference>
<dbReference type="CDD" id="cd00353">
    <property type="entry name" value="Ribosomal_S15p_S13e"/>
    <property type="match status" value="1"/>
</dbReference>
<dbReference type="FunFam" id="1.10.287.10:FF:000002">
    <property type="entry name" value="30S ribosomal protein S15"/>
    <property type="match status" value="1"/>
</dbReference>
<dbReference type="Gene3D" id="6.10.250.3130">
    <property type="match status" value="1"/>
</dbReference>
<dbReference type="Gene3D" id="1.10.287.10">
    <property type="entry name" value="S15/NS1, RNA-binding"/>
    <property type="match status" value="1"/>
</dbReference>
<dbReference type="HAMAP" id="MF_01343_B">
    <property type="entry name" value="Ribosomal_uS15_B"/>
    <property type="match status" value="1"/>
</dbReference>
<dbReference type="InterPro" id="IPR000589">
    <property type="entry name" value="Ribosomal_uS15"/>
</dbReference>
<dbReference type="InterPro" id="IPR005290">
    <property type="entry name" value="Ribosomal_uS15_bac-type"/>
</dbReference>
<dbReference type="InterPro" id="IPR009068">
    <property type="entry name" value="uS15_NS1_RNA-bd_sf"/>
</dbReference>
<dbReference type="NCBIfam" id="TIGR00952">
    <property type="entry name" value="S15_bact"/>
    <property type="match status" value="1"/>
</dbReference>
<dbReference type="PANTHER" id="PTHR23321">
    <property type="entry name" value="RIBOSOMAL PROTEIN S15, BACTERIAL AND ORGANELLAR"/>
    <property type="match status" value="1"/>
</dbReference>
<dbReference type="PANTHER" id="PTHR23321:SF26">
    <property type="entry name" value="SMALL RIBOSOMAL SUBUNIT PROTEIN US15M"/>
    <property type="match status" value="1"/>
</dbReference>
<dbReference type="Pfam" id="PF00312">
    <property type="entry name" value="Ribosomal_S15"/>
    <property type="match status" value="1"/>
</dbReference>
<dbReference type="SMART" id="SM01387">
    <property type="entry name" value="Ribosomal_S15"/>
    <property type="match status" value="1"/>
</dbReference>
<dbReference type="SUPFAM" id="SSF47060">
    <property type="entry name" value="S15/NS1 RNA-binding domain"/>
    <property type="match status" value="1"/>
</dbReference>
<dbReference type="PROSITE" id="PS00362">
    <property type="entry name" value="RIBOSOMAL_S15"/>
    <property type="match status" value="1"/>
</dbReference>
<evidence type="ECO:0000255" key="1">
    <source>
        <dbReference type="HAMAP-Rule" id="MF_01343"/>
    </source>
</evidence>
<evidence type="ECO:0000305" key="2"/>
<accession>B8I2R6</accession>
<comment type="function">
    <text evidence="1">One of the primary rRNA binding proteins, it binds directly to 16S rRNA where it helps nucleate assembly of the platform of the 30S subunit by binding and bridging several RNA helices of the 16S rRNA.</text>
</comment>
<comment type="function">
    <text evidence="1">Forms an intersubunit bridge (bridge B4) with the 23S rRNA of the 50S subunit in the ribosome.</text>
</comment>
<comment type="subunit">
    <text evidence="1">Part of the 30S ribosomal subunit. Forms a bridge to the 50S subunit in the 70S ribosome, contacting the 23S rRNA.</text>
</comment>
<comment type="similarity">
    <text evidence="1">Belongs to the universal ribosomal protein uS15 family.</text>
</comment>
<organism>
    <name type="scientific">Ruminiclostridium cellulolyticum (strain ATCC 35319 / DSM 5812 / JCM 6584 / H10)</name>
    <name type="common">Clostridium cellulolyticum</name>
    <dbReference type="NCBI Taxonomy" id="394503"/>
    <lineage>
        <taxon>Bacteria</taxon>
        <taxon>Bacillati</taxon>
        <taxon>Bacillota</taxon>
        <taxon>Clostridia</taxon>
        <taxon>Eubacteriales</taxon>
        <taxon>Oscillospiraceae</taxon>
        <taxon>Ruminiclostridium</taxon>
    </lineage>
</organism>
<sequence length="87" mass="10202">MVKDLKQEIITKYQLHEGDTGSPEVQVAILTQRINHLNEHLKIHKKDYHSGRGLLKMVGARRSLLNYLKKNDIERYRAIIQKLGLRK</sequence>
<proteinExistence type="inferred from homology"/>
<reference key="1">
    <citation type="submission" date="2009-01" db="EMBL/GenBank/DDBJ databases">
        <title>Complete sequence of Clostridium cellulolyticum H10.</title>
        <authorList>
            <consortium name="US DOE Joint Genome Institute"/>
            <person name="Lucas S."/>
            <person name="Copeland A."/>
            <person name="Lapidus A."/>
            <person name="Glavina del Rio T."/>
            <person name="Dalin E."/>
            <person name="Tice H."/>
            <person name="Bruce D."/>
            <person name="Goodwin L."/>
            <person name="Pitluck S."/>
            <person name="Chertkov O."/>
            <person name="Saunders E."/>
            <person name="Brettin T."/>
            <person name="Detter J.C."/>
            <person name="Han C."/>
            <person name="Larimer F."/>
            <person name="Land M."/>
            <person name="Hauser L."/>
            <person name="Kyrpides N."/>
            <person name="Ivanova N."/>
            <person name="Zhou J."/>
            <person name="Richardson P."/>
        </authorList>
    </citation>
    <scope>NUCLEOTIDE SEQUENCE [LARGE SCALE GENOMIC DNA]</scope>
    <source>
        <strain>ATCC 35319 / DSM 5812 / JCM 6584 / H10</strain>
    </source>
</reference>
<keyword id="KW-1185">Reference proteome</keyword>
<keyword id="KW-0687">Ribonucleoprotein</keyword>
<keyword id="KW-0689">Ribosomal protein</keyword>
<keyword id="KW-0694">RNA-binding</keyword>
<keyword id="KW-0699">rRNA-binding</keyword>
<protein>
    <recommendedName>
        <fullName evidence="1">Small ribosomal subunit protein uS15</fullName>
    </recommendedName>
    <alternativeName>
        <fullName evidence="2">30S ribosomal protein S15</fullName>
    </alternativeName>
</protein>
<name>RS15_RUMCH</name>
<gene>
    <name evidence="1" type="primary">rpsO</name>
    <name type="ordered locus">Ccel_1708</name>
</gene>